<comment type="function">
    <text evidence="1">Involved in the replication of mitochondrial DNA. Associates with mitochondrial DNA (By similarity).</text>
</comment>
<comment type="catalytic activity">
    <reaction>
        <text>DNA(n) + a 2'-deoxyribonucleoside 5'-triphosphate = DNA(n+1) + diphosphate</text>
        <dbReference type="Rhea" id="RHEA:22508"/>
        <dbReference type="Rhea" id="RHEA-COMP:17339"/>
        <dbReference type="Rhea" id="RHEA-COMP:17340"/>
        <dbReference type="ChEBI" id="CHEBI:33019"/>
        <dbReference type="ChEBI" id="CHEBI:61560"/>
        <dbReference type="ChEBI" id="CHEBI:173112"/>
        <dbReference type="EC" id="2.7.7.7"/>
    </reaction>
</comment>
<comment type="cofactor">
    <cofactor>
        <name>Mg(2+)</name>
        <dbReference type="ChEBI" id="CHEBI:18420"/>
    </cofactor>
</comment>
<comment type="subunit">
    <text evidence="1">Heterotrimer composed of a catalytic subunit and a homodimer of accessory subunits.</text>
</comment>
<comment type="subcellular location">
    <subcellularLocation>
        <location>Mitochondrion</location>
    </subcellularLocation>
    <subcellularLocation>
        <location evidence="1">Mitochondrion matrix</location>
        <location evidence="1">Mitochondrion nucleoid</location>
    </subcellularLocation>
</comment>
<comment type="similarity">
    <text evidence="3">Belongs to the DNA polymerase type-A family.</text>
</comment>
<protein>
    <recommendedName>
        <fullName>DNA polymerase subunit gamma-1</fullName>
        <ecNumber>2.7.7.7</ecNumber>
    </recommendedName>
    <alternativeName>
        <fullName>Mitochondrial DNA polymerase catalytic subunit</fullName>
    </alternativeName>
</protein>
<accession>Q91684</accession>
<proteinExistence type="evidence at transcript level"/>
<organism>
    <name type="scientific">Xenopus laevis</name>
    <name type="common">African clawed frog</name>
    <dbReference type="NCBI Taxonomy" id="8355"/>
    <lineage>
        <taxon>Eukaryota</taxon>
        <taxon>Metazoa</taxon>
        <taxon>Chordata</taxon>
        <taxon>Craniata</taxon>
        <taxon>Vertebrata</taxon>
        <taxon>Euteleostomi</taxon>
        <taxon>Amphibia</taxon>
        <taxon>Batrachia</taxon>
        <taxon>Anura</taxon>
        <taxon>Pipoidea</taxon>
        <taxon>Pipidae</taxon>
        <taxon>Xenopodinae</taxon>
        <taxon>Xenopus</taxon>
        <taxon>Xenopus</taxon>
    </lineage>
</organism>
<dbReference type="EC" id="2.7.7.7"/>
<dbReference type="EMBL" id="U49509">
    <property type="protein sequence ID" value="AAB17117.1"/>
    <property type="molecule type" value="mRNA"/>
</dbReference>
<dbReference type="PIR" id="S68258">
    <property type="entry name" value="S68258"/>
</dbReference>
<dbReference type="RefSeq" id="NP_001081464.1">
    <property type="nucleotide sequence ID" value="NM_001087995.1"/>
</dbReference>
<dbReference type="SMR" id="Q91684"/>
<dbReference type="ComplexPortal" id="CPX-2095">
    <property type="entry name" value="Mitochondrial DNA polymerase gamma complex"/>
</dbReference>
<dbReference type="GeneID" id="397851"/>
<dbReference type="KEGG" id="xla:397851"/>
<dbReference type="AGR" id="Xenbase:XB-GENE-865213"/>
<dbReference type="CTD" id="397851"/>
<dbReference type="Xenbase" id="XB-GENE-865213">
    <property type="gene designation" value="polg.L"/>
</dbReference>
<dbReference type="OrthoDB" id="5588663at2759"/>
<dbReference type="Proteomes" id="UP000186698">
    <property type="component" value="Chromosome 3L"/>
</dbReference>
<dbReference type="Bgee" id="397851">
    <property type="expression patterns" value="Expressed in oocyte and 19 other cell types or tissues"/>
</dbReference>
<dbReference type="GO" id="GO:0005760">
    <property type="term" value="C:gamma DNA polymerase complex"/>
    <property type="evidence" value="ECO:0000353"/>
    <property type="project" value="ComplexPortal"/>
</dbReference>
<dbReference type="GO" id="GO:0005759">
    <property type="term" value="C:mitochondrial matrix"/>
    <property type="evidence" value="ECO:0000303"/>
    <property type="project" value="ComplexPortal"/>
</dbReference>
<dbReference type="GO" id="GO:0042645">
    <property type="term" value="C:mitochondrial nucleoid"/>
    <property type="evidence" value="ECO:0000250"/>
    <property type="project" value="UniProtKB"/>
</dbReference>
<dbReference type="GO" id="GO:0005739">
    <property type="term" value="C:mitochondrion"/>
    <property type="evidence" value="ECO:0000318"/>
    <property type="project" value="GO_Central"/>
</dbReference>
<dbReference type="GO" id="GO:0008408">
    <property type="term" value="F:3'-5' exonuclease activity"/>
    <property type="evidence" value="ECO:0000318"/>
    <property type="project" value="GO_Central"/>
</dbReference>
<dbReference type="GO" id="GO:0003682">
    <property type="term" value="F:chromatin binding"/>
    <property type="evidence" value="ECO:0000250"/>
    <property type="project" value="UniProtKB"/>
</dbReference>
<dbReference type="GO" id="GO:0003677">
    <property type="term" value="F:DNA binding"/>
    <property type="evidence" value="ECO:0007669"/>
    <property type="project" value="UniProtKB-KW"/>
</dbReference>
<dbReference type="GO" id="GO:0003887">
    <property type="term" value="F:DNA-directed DNA polymerase activity"/>
    <property type="evidence" value="ECO:0000318"/>
    <property type="project" value="GO_Central"/>
</dbReference>
<dbReference type="GO" id="GO:0006264">
    <property type="term" value="P:mitochondrial DNA replication"/>
    <property type="evidence" value="ECO:0000318"/>
    <property type="project" value="GO_Central"/>
</dbReference>
<dbReference type="CDD" id="cd08641">
    <property type="entry name" value="DNA_pol_gammaA"/>
    <property type="match status" value="1"/>
</dbReference>
<dbReference type="FunFam" id="1.10.150.20:FF:000024">
    <property type="entry name" value="DNA polymerase gamma, catalytic subunit"/>
    <property type="match status" value="1"/>
</dbReference>
<dbReference type="FunFam" id="3.30.420.390:FF:000001">
    <property type="entry name" value="DNA polymerase gamma, catalytic subunit"/>
    <property type="match status" value="1"/>
</dbReference>
<dbReference type="FunFam" id="3.30.420.390:FF:000002">
    <property type="entry name" value="DNA polymerase gamma, catalytic subunit"/>
    <property type="match status" value="1"/>
</dbReference>
<dbReference type="Gene3D" id="3.30.420.390">
    <property type="match status" value="2"/>
</dbReference>
<dbReference type="Gene3D" id="3.30.70.370">
    <property type="match status" value="1"/>
</dbReference>
<dbReference type="Gene3D" id="1.10.150.20">
    <property type="entry name" value="5' to 3' exonuclease, C-terminal subdomain"/>
    <property type="match status" value="1"/>
</dbReference>
<dbReference type="InterPro" id="IPR019760">
    <property type="entry name" value="DNA-dir_DNA_pol_A_CS"/>
</dbReference>
<dbReference type="InterPro" id="IPR002297">
    <property type="entry name" value="DNA-dir_DNA_pol_A_mt"/>
</dbReference>
<dbReference type="InterPro" id="IPR001098">
    <property type="entry name" value="DNA-dir_DNA_pol_A_palm_dom"/>
</dbReference>
<dbReference type="InterPro" id="IPR043502">
    <property type="entry name" value="DNA/RNA_pol_sf"/>
</dbReference>
<dbReference type="InterPro" id="IPR041336">
    <property type="entry name" value="DNApol_Exo"/>
</dbReference>
<dbReference type="InterPro" id="IPR047580">
    <property type="entry name" value="POLG_palm_dom"/>
</dbReference>
<dbReference type="InterPro" id="IPR012337">
    <property type="entry name" value="RNaseH-like_sf"/>
</dbReference>
<dbReference type="PANTHER" id="PTHR10267">
    <property type="entry name" value="DNA POLYMERASE SUBUNIT GAMMA-1"/>
    <property type="match status" value="1"/>
</dbReference>
<dbReference type="PANTHER" id="PTHR10267:SF0">
    <property type="entry name" value="DNA POLYMERASE SUBUNIT GAMMA-1"/>
    <property type="match status" value="1"/>
</dbReference>
<dbReference type="Pfam" id="PF18136">
    <property type="entry name" value="DNApol_Exo"/>
    <property type="match status" value="1"/>
</dbReference>
<dbReference type="PIRSF" id="PIRSF000797">
    <property type="entry name" value="DNA_pol_mt"/>
    <property type="match status" value="1"/>
</dbReference>
<dbReference type="PRINTS" id="PR00867">
    <property type="entry name" value="DNAPOLG"/>
</dbReference>
<dbReference type="SMART" id="SM00482">
    <property type="entry name" value="POLAc"/>
    <property type="match status" value="1"/>
</dbReference>
<dbReference type="SUPFAM" id="SSF56672">
    <property type="entry name" value="DNA/RNA polymerases"/>
    <property type="match status" value="1"/>
</dbReference>
<dbReference type="SUPFAM" id="SSF53098">
    <property type="entry name" value="Ribonuclease H-like"/>
    <property type="match status" value="1"/>
</dbReference>
<dbReference type="PROSITE" id="PS00447">
    <property type="entry name" value="DNA_POLYMERASE_A"/>
    <property type="match status" value="1"/>
</dbReference>
<evidence type="ECO:0000250" key="1"/>
<evidence type="ECO:0000256" key="2">
    <source>
        <dbReference type="SAM" id="MobiDB-lite"/>
    </source>
</evidence>
<evidence type="ECO:0000305" key="3"/>
<keyword id="KW-0235">DNA replication</keyword>
<keyword id="KW-0238">DNA-binding</keyword>
<keyword id="KW-0239">DNA-directed DNA polymerase</keyword>
<keyword id="KW-0460">Magnesium</keyword>
<keyword id="KW-0496">Mitochondrion</keyword>
<keyword id="KW-1135">Mitochondrion nucleoid</keyword>
<keyword id="KW-0548">Nucleotidyltransferase</keyword>
<keyword id="KW-1185">Reference proteome</keyword>
<keyword id="KW-0808">Transferase</keyword>
<reference key="1">
    <citation type="journal article" date="1996" name="Nucleic Acids Res.">
        <title>The gamma subfamily of DNA polymerases: cloning of a developmentally regulated cDNA encoding Xenopus laevis mitochondrial DNA polymerase gamma.</title>
        <authorList>
            <person name="Ye F."/>
            <person name="Carrodeguas J.A."/>
            <person name="Bogenhagen D.F."/>
        </authorList>
    </citation>
    <scope>NUCLEOTIDE SEQUENCE [MRNA]</scope>
</reference>
<name>DPOG1_XENLA</name>
<sequence>MNRLLQKGTSLVPSWRTRGCRYRRCSYAPQLHAKPLEMETSQRRMNPLNIQMLSKGFHEQIFRGKQVQHAEEDVQRSITHLKNHELWGQETSTVPDVELQLPKMYGNNIEEHFQILAQKQSLPYLEAANDLLNCQLPAMPQTWAWQSGWTRYTATGEKELVDFPDEKAMVFDVEVCVTEGCCPTLAVAASPQNWYSWCSRRLIEGRYTWSKELLLSDLFPLETSMNCNYMTKNNWTERLVVGHNVSFDRAHIKEQYLIKGSKTRFMDTMSMHMAISGLTGFQRTLWMASKYGKKKGLQEVKQHIKKTRSNFSGSPISSWDWVNISSINNLADVHALYVGGPPLEKEARELFVKGSMSDIRTEFQELMRYCALDVQATHEVFQEQFPLFMERCPHPVTLSGMLEMGVSYLPVNQNWERYLDEAQTSYEELQKEMKKSLMKLANDACQLLTKDAYKEDPWLWDLEWDIQESKQKKTKISKKQKKANEAAESVGNKLVEDHNEDPGPPTEKEESRPSMGKLYLEDLKLKTLPLLPKRNQHLPGHPGWYRKLCPKLEDPDWLPGPGLISLQMRLTPKLMRLTWDGYPLHYSEKHGWGYLVPGRKNNKLNNEEEEEIIPCPYRAIEDIYAEYSKNKTKDGCLSQHSTIPEEFMLTDDNSMWQKVEELSRTEMDLSSEVPATAKAKKRNNSSEHPVKLEMEFDSLPDNHHGNSPCGDVNVSGCWFYKLPHKDGNANNVGSPFAKDFLPKMEDGTLQASTGDSSATRALEINKMISFWRNAHKRISSQMVVWMKKNELHRTITRDPEFDEENKYGAILAQVVSAGTITRRAVEPTWLTASNARADRVGSELKAMVQVPPGYHLIGADVDSQELWIAAILGEAHFAGIHGCTAFGWMTLQGKKSSGTDLHSKTASTVGISREHAKVFNYGRIYGAGQPFAERLLMQFNHRLTQEQAAEKAKQMYAVTKGIRRYILSKEGEWLVEELGISVERGEENSVNLQDLRKIQKDATKRSRRKWNLVSRRIWTGGTESQMFNKLETIAMSPSPKTPVLGCRISRALEPTAVKGEFITSRVNWVVQSSAVDYLHLMLVAMKWLFEAYDIDGRFCISIHDEVRYLVHSKDRYRAALALQITNLLTRCMFASRLGIQDVPQSVAFFSAVDIDKCLRKEVTMDCSTPSNPNGMEKRYGIPQGEALDIYQILKVTKGVL</sequence>
<gene>
    <name type="primary">polg</name>
</gene>
<feature type="chain" id="PRO_0000101274" description="DNA polymerase subunit gamma-1">
    <location>
        <begin position="1"/>
        <end position="1200"/>
    </location>
</feature>
<feature type="region of interest" description="Disordered" evidence="2">
    <location>
        <begin position="471"/>
        <end position="515"/>
    </location>
</feature>
<feature type="region of interest" description="Disordered" evidence="2">
    <location>
        <begin position="667"/>
        <end position="688"/>
    </location>
</feature>
<feature type="compositionally biased region" description="Basic residues" evidence="2">
    <location>
        <begin position="472"/>
        <end position="481"/>
    </location>
</feature>
<feature type="compositionally biased region" description="Basic and acidic residues" evidence="2">
    <location>
        <begin position="494"/>
        <end position="512"/>
    </location>
</feature>